<evidence type="ECO:0000255" key="1">
    <source>
        <dbReference type="HAMAP-Rule" id="MF_01510"/>
    </source>
</evidence>
<evidence type="ECO:0007829" key="2">
    <source>
        <dbReference type="PDB" id="2LXN"/>
    </source>
</evidence>
<evidence type="ECO:0007829" key="3">
    <source>
        <dbReference type="PDB" id="7D40"/>
    </source>
</evidence>
<evidence type="ECO:0007829" key="4">
    <source>
        <dbReference type="PDB" id="7D97"/>
    </source>
</evidence>
<dbReference type="EC" id="6.3.5.2" evidence="1"/>
<dbReference type="EMBL" id="L77117">
    <property type="protein sequence ID" value="AAB99597.1"/>
    <property type="molecule type" value="Genomic_DNA"/>
</dbReference>
<dbReference type="PIR" id="F64496">
    <property type="entry name" value="F64496"/>
</dbReference>
<dbReference type="RefSeq" id="WP_010871100.1">
    <property type="nucleotide sequence ID" value="NC_000909.1"/>
</dbReference>
<dbReference type="PDB" id="2LXN">
    <property type="method" value="NMR"/>
    <property type="chains" value="A=1-188"/>
</dbReference>
<dbReference type="PDB" id="7D40">
    <property type="method" value="X-ray"/>
    <property type="resolution" value="1.67 A"/>
    <property type="chains" value="A/B=1-188"/>
</dbReference>
<dbReference type="PDB" id="7D95">
    <property type="method" value="X-ray"/>
    <property type="resolution" value="1.67 A"/>
    <property type="chains" value="A/B=1-188"/>
</dbReference>
<dbReference type="PDB" id="7D96">
    <property type="method" value="X-ray"/>
    <property type="resolution" value="2.29 A"/>
    <property type="chains" value="A=1-188"/>
</dbReference>
<dbReference type="PDB" id="7D97">
    <property type="method" value="X-ray"/>
    <property type="resolution" value="1.89 A"/>
    <property type="chains" value="A/B/C/D=1-188"/>
</dbReference>
<dbReference type="PDB" id="7YC6">
    <property type="method" value="X-ray"/>
    <property type="resolution" value="2.40 A"/>
    <property type="chains" value="A=1-188"/>
</dbReference>
<dbReference type="PDB" id="8GR1">
    <property type="method" value="X-ray"/>
    <property type="resolution" value="2.50 A"/>
    <property type="chains" value="A/B/C/D=1-188"/>
</dbReference>
<dbReference type="PDB" id="8GR3">
    <property type="method" value="X-ray"/>
    <property type="resolution" value="2.40 A"/>
    <property type="chains" value="A/B/C/D=1-188"/>
</dbReference>
<dbReference type="PDBsum" id="2LXN"/>
<dbReference type="PDBsum" id="7D40"/>
<dbReference type="PDBsum" id="7D95"/>
<dbReference type="PDBsum" id="7D96"/>
<dbReference type="PDBsum" id="7D97"/>
<dbReference type="PDBsum" id="7YC6"/>
<dbReference type="PDBsum" id="8GR1"/>
<dbReference type="PDBsum" id="8GR3"/>
<dbReference type="BMRB" id="Q58970"/>
<dbReference type="SMR" id="Q58970"/>
<dbReference type="FunCoup" id="Q58970">
    <property type="interactions" value="32"/>
</dbReference>
<dbReference type="STRING" id="243232.MJ_1575"/>
<dbReference type="MEROPS" id="C26.A31"/>
<dbReference type="PaxDb" id="243232-MJ_1575"/>
<dbReference type="EnsemblBacteria" id="AAB99597">
    <property type="protein sequence ID" value="AAB99597"/>
    <property type="gene ID" value="MJ_1575"/>
</dbReference>
<dbReference type="GeneID" id="1452484"/>
<dbReference type="KEGG" id="mja:MJ_1575"/>
<dbReference type="eggNOG" id="arCOG00087">
    <property type="taxonomic scope" value="Archaea"/>
</dbReference>
<dbReference type="HOGENOM" id="CLU_014340_1_4_2"/>
<dbReference type="InParanoid" id="Q58970"/>
<dbReference type="OrthoDB" id="10772at2157"/>
<dbReference type="PhylomeDB" id="Q58970"/>
<dbReference type="UniPathway" id="UPA00189">
    <property type="reaction ID" value="UER00296"/>
</dbReference>
<dbReference type="EvolutionaryTrace" id="Q58970"/>
<dbReference type="Proteomes" id="UP000000805">
    <property type="component" value="Chromosome"/>
</dbReference>
<dbReference type="GO" id="GO:0005524">
    <property type="term" value="F:ATP binding"/>
    <property type="evidence" value="ECO:0007669"/>
    <property type="project" value="UniProtKB-KW"/>
</dbReference>
<dbReference type="GO" id="GO:0003922">
    <property type="term" value="F:GMP synthase (glutamine-hydrolyzing) activity"/>
    <property type="evidence" value="ECO:0007669"/>
    <property type="project" value="UniProtKB-UniRule"/>
</dbReference>
<dbReference type="CDD" id="cd01742">
    <property type="entry name" value="GATase1_GMP_Synthase"/>
    <property type="match status" value="1"/>
</dbReference>
<dbReference type="FunFam" id="3.40.50.880:FF:000047">
    <property type="entry name" value="GMP synthase [glutamine-hydrolyzing] subunit A"/>
    <property type="match status" value="1"/>
</dbReference>
<dbReference type="Gene3D" id="3.40.50.880">
    <property type="match status" value="1"/>
</dbReference>
<dbReference type="HAMAP" id="MF_01510">
    <property type="entry name" value="GMP_synthase_A"/>
    <property type="match status" value="1"/>
</dbReference>
<dbReference type="InterPro" id="IPR029062">
    <property type="entry name" value="Class_I_gatase-like"/>
</dbReference>
<dbReference type="InterPro" id="IPR017926">
    <property type="entry name" value="GATASE"/>
</dbReference>
<dbReference type="InterPro" id="IPR004739">
    <property type="entry name" value="GMP_synth_GATase"/>
</dbReference>
<dbReference type="InterPro" id="IPR023686">
    <property type="entry name" value="GMP_synthase_A"/>
</dbReference>
<dbReference type="NCBIfam" id="TIGR00888">
    <property type="entry name" value="guaA_Nterm"/>
    <property type="match status" value="1"/>
</dbReference>
<dbReference type="NCBIfam" id="NF001975">
    <property type="entry name" value="PRK00758.1"/>
    <property type="match status" value="1"/>
</dbReference>
<dbReference type="PANTHER" id="PTHR11922:SF2">
    <property type="entry name" value="GMP SYNTHASE [GLUTAMINE-HYDROLYZING]"/>
    <property type="match status" value="1"/>
</dbReference>
<dbReference type="PANTHER" id="PTHR11922">
    <property type="entry name" value="GMP SYNTHASE-RELATED"/>
    <property type="match status" value="1"/>
</dbReference>
<dbReference type="Pfam" id="PF00117">
    <property type="entry name" value="GATase"/>
    <property type="match status" value="1"/>
</dbReference>
<dbReference type="PRINTS" id="PR00097">
    <property type="entry name" value="ANTSNTHASEII"/>
</dbReference>
<dbReference type="PRINTS" id="PR00096">
    <property type="entry name" value="GATASE"/>
</dbReference>
<dbReference type="SUPFAM" id="SSF52317">
    <property type="entry name" value="Class I glutamine amidotransferase-like"/>
    <property type="match status" value="1"/>
</dbReference>
<dbReference type="PROSITE" id="PS51273">
    <property type="entry name" value="GATASE_TYPE_1"/>
    <property type="match status" value="1"/>
</dbReference>
<sequence>MIVILDNGGQYVHRIHRSLKYIGVSSKIVPNTTPLEEIESNKEVKGIILSGGPDIEKAKNCIDIALNAKLPILGICLGHQLIALAYGGEVGRAEAEEYALTKVYVDKENDLFKNVPREFNAWASHKDEVKKVPEGFEILAHSDICQVEAMKHKTKPIYGVQFHPEVAHTEYGNEILKNFCKVCGYKFE</sequence>
<gene>
    <name evidence="1" type="primary">guaAA</name>
    <name type="ordered locus">MJ1575</name>
</gene>
<proteinExistence type="evidence at protein level"/>
<name>GUAAA_METJA</name>
<reference key="1">
    <citation type="journal article" date="1996" name="Science">
        <title>Complete genome sequence of the methanogenic archaeon, Methanococcus jannaschii.</title>
        <authorList>
            <person name="Bult C.J."/>
            <person name="White O."/>
            <person name="Olsen G.J."/>
            <person name="Zhou L."/>
            <person name="Fleischmann R.D."/>
            <person name="Sutton G.G."/>
            <person name="Blake J.A."/>
            <person name="FitzGerald L.M."/>
            <person name="Clayton R.A."/>
            <person name="Gocayne J.D."/>
            <person name="Kerlavage A.R."/>
            <person name="Dougherty B.A."/>
            <person name="Tomb J.-F."/>
            <person name="Adams M.D."/>
            <person name="Reich C.I."/>
            <person name="Overbeek R."/>
            <person name="Kirkness E.F."/>
            <person name="Weinstock K.G."/>
            <person name="Merrick J.M."/>
            <person name="Glodek A."/>
            <person name="Scott J.L."/>
            <person name="Geoghagen N.S.M."/>
            <person name="Weidman J.F."/>
            <person name="Fuhrmann J.L."/>
            <person name="Nguyen D."/>
            <person name="Utterback T.R."/>
            <person name="Kelley J.M."/>
            <person name="Peterson J.D."/>
            <person name="Sadow P.W."/>
            <person name="Hanna M.C."/>
            <person name="Cotton M.D."/>
            <person name="Roberts K.M."/>
            <person name="Hurst M.A."/>
            <person name="Kaine B.P."/>
            <person name="Borodovsky M."/>
            <person name="Klenk H.-P."/>
            <person name="Fraser C.M."/>
            <person name="Smith H.O."/>
            <person name="Woese C.R."/>
            <person name="Venter J.C."/>
        </authorList>
    </citation>
    <scope>NUCLEOTIDE SEQUENCE [LARGE SCALE GENOMIC DNA]</scope>
    <source>
        <strain>ATCC 43067 / DSM 2661 / JAL-1 / JCM 10045 / NBRC 100440</strain>
    </source>
</reference>
<feature type="chain" id="PRO_0000140221" description="GMP synthase [glutamine-hydrolyzing] subunit A">
    <location>
        <begin position="1"/>
        <end position="188"/>
    </location>
</feature>
<feature type="domain" description="Glutamine amidotransferase type-1" evidence="1">
    <location>
        <begin position="1"/>
        <end position="188"/>
    </location>
</feature>
<feature type="active site" description="Nucleophile" evidence="1">
    <location>
        <position position="76"/>
    </location>
</feature>
<feature type="active site" evidence="1">
    <location>
        <position position="163"/>
    </location>
</feature>
<feature type="active site" evidence="1">
    <location>
        <position position="165"/>
    </location>
</feature>
<feature type="strand" evidence="3">
    <location>
        <begin position="2"/>
        <end position="6"/>
    </location>
</feature>
<feature type="helix" evidence="3">
    <location>
        <begin position="12"/>
        <end position="21"/>
    </location>
</feature>
<feature type="strand" evidence="3">
    <location>
        <begin position="26"/>
        <end position="30"/>
    </location>
</feature>
<feature type="strand" evidence="2">
    <location>
        <begin position="31"/>
        <end position="33"/>
    </location>
</feature>
<feature type="helix" evidence="3">
    <location>
        <begin position="35"/>
        <end position="40"/>
    </location>
</feature>
<feature type="strand" evidence="3">
    <location>
        <begin position="46"/>
        <end position="49"/>
    </location>
</feature>
<feature type="helix" evidence="3">
    <location>
        <begin position="55"/>
        <end position="57"/>
    </location>
</feature>
<feature type="helix" evidence="3">
    <location>
        <begin position="60"/>
        <end position="67"/>
    </location>
</feature>
<feature type="strand" evidence="3">
    <location>
        <begin position="72"/>
        <end position="75"/>
    </location>
</feature>
<feature type="helix" evidence="3">
    <location>
        <begin position="77"/>
        <end position="85"/>
    </location>
</feature>
<feature type="strand" evidence="3">
    <location>
        <begin position="89"/>
        <end position="92"/>
    </location>
</feature>
<feature type="strand" evidence="4">
    <location>
        <begin position="93"/>
        <end position="95"/>
    </location>
</feature>
<feature type="strand" evidence="3">
    <location>
        <begin position="99"/>
        <end position="106"/>
    </location>
</feature>
<feature type="helix" evidence="4">
    <location>
        <begin position="110"/>
        <end position="112"/>
    </location>
</feature>
<feature type="strand" evidence="3">
    <location>
        <begin position="117"/>
        <end position="123"/>
    </location>
</feature>
<feature type="strand" evidence="3">
    <location>
        <begin position="126"/>
        <end position="131"/>
    </location>
</feature>
<feature type="strand" evidence="3">
    <location>
        <begin position="136"/>
        <end position="141"/>
    </location>
</feature>
<feature type="strand" evidence="2">
    <location>
        <begin position="142"/>
        <end position="144"/>
    </location>
</feature>
<feature type="strand" evidence="3">
    <location>
        <begin position="148"/>
        <end position="162"/>
    </location>
</feature>
<feature type="strand" evidence="2">
    <location>
        <begin position="166"/>
        <end position="169"/>
    </location>
</feature>
<feature type="helix" evidence="3">
    <location>
        <begin position="172"/>
        <end position="182"/>
    </location>
</feature>
<comment type="function">
    <text evidence="1">Catalyzes the synthesis of GMP from XMP.</text>
</comment>
<comment type="catalytic activity">
    <reaction evidence="1">
        <text>XMP + L-glutamine + ATP + H2O = GMP + L-glutamate + AMP + diphosphate + 2 H(+)</text>
        <dbReference type="Rhea" id="RHEA:11680"/>
        <dbReference type="ChEBI" id="CHEBI:15377"/>
        <dbReference type="ChEBI" id="CHEBI:15378"/>
        <dbReference type="ChEBI" id="CHEBI:29985"/>
        <dbReference type="ChEBI" id="CHEBI:30616"/>
        <dbReference type="ChEBI" id="CHEBI:33019"/>
        <dbReference type="ChEBI" id="CHEBI:57464"/>
        <dbReference type="ChEBI" id="CHEBI:58115"/>
        <dbReference type="ChEBI" id="CHEBI:58359"/>
        <dbReference type="ChEBI" id="CHEBI:456215"/>
        <dbReference type="EC" id="6.3.5.2"/>
    </reaction>
</comment>
<comment type="pathway">
    <text evidence="1">Purine metabolism; GMP biosynthesis; GMP from XMP (L-Gln route): step 1/1.</text>
</comment>
<comment type="subunit">
    <text evidence="1">Heterodimer composed of a glutamine amidotransferase subunit (A) and a GMP-binding subunit (B).</text>
</comment>
<protein>
    <recommendedName>
        <fullName evidence="1">GMP synthase [glutamine-hydrolyzing] subunit A</fullName>
        <ecNumber evidence="1">6.3.5.2</ecNumber>
    </recommendedName>
    <alternativeName>
        <fullName evidence="1">Glutamine amidotransferase</fullName>
    </alternativeName>
</protein>
<keyword id="KW-0002">3D-structure</keyword>
<keyword id="KW-0067">ATP-binding</keyword>
<keyword id="KW-0315">Glutamine amidotransferase</keyword>
<keyword id="KW-0332">GMP biosynthesis</keyword>
<keyword id="KW-0436">Ligase</keyword>
<keyword id="KW-0547">Nucleotide-binding</keyword>
<keyword id="KW-0658">Purine biosynthesis</keyword>
<keyword id="KW-1185">Reference proteome</keyword>
<organism>
    <name type="scientific">Methanocaldococcus jannaschii (strain ATCC 43067 / DSM 2661 / JAL-1 / JCM 10045 / NBRC 100440)</name>
    <name type="common">Methanococcus jannaschii</name>
    <dbReference type="NCBI Taxonomy" id="243232"/>
    <lineage>
        <taxon>Archaea</taxon>
        <taxon>Methanobacteriati</taxon>
        <taxon>Methanobacteriota</taxon>
        <taxon>Methanomada group</taxon>
        <taxon>Methanococci</taxon>
        <taxon>Methanococcales</taxon>
        <taxon>Methanocaldococcaceae</taxon>
        <taxon>Methanocaldococcus</taxon>
    </lineage>
</organism>
<accession>Q58970</accession>